<protein>
    <recommendedName>
        <fullName evidence="1">CDP-diacylglycerol pyrophosphatase</fullName>
        <ecNumber evidence="1">3.6.1.26</ecNumber>
    </recommendedName>
    <alternativeName>
        <fullName evidence="1">CDP-diacylglycerol phosphatidylhydrolase</fullName>
    </alternativeName>
    <alternativeName>
        <fullName evidence="1">CDP-diglyceride hydrolase</fullName>
    </alternativeName>
</protein>
<name>CDH_CROS8</name>
<feature type="chain" id="PRO_1000019263" description="CDP-diacylglycerol pyrophosphatase">
    <location>
        <begin position="1"/>
        <end position="255"/>
    </location>
</feature>
<feature type="transmembrane region" description="Helical" evidence="1">
    <location>
        <begin position="5"/>
        <end position="27"/>
    </location>
</feature>
<evidence type="ECO:0000255" key="1">
    <source>
        <dbReference type="HAMAP-Rule" id="MF_00319"/>
    </source>
</evidence>
<proteinExistence type="inferred from homology"/>
<comment type="catalytic activity">
    <reaction evidence="1">
        <text>a CDP-1,2-diacyl-sn-glycerol + H2O = a 1,2-diacyl-sn-glycero-3-phosphate + CMP + 2 H(+)</text>
        <dbReference type="Rhea" id="RHEA:15221"/>
        <dbReference type="ChEBI" id="CHEBI:15377"/>
        <dbReference type="ChEBI" id="CHEBI:15378"/>
        <dbReference type="ChEBI" id="CHEBI:58332"/>
        <dbReference type="ChEBI" id="CHEBI:58608"/>
        <dbReference type="ChEBI" id="CHEBI:60377"/>
        <dbReference type="EC" id="3.6.1.26"/>
    </reaction>
</comment>
<comment type="pathway">
    <text evidence="1">Phospholipid metabolism; CDP-diacylglycerol degradation; phosphatidate from CDP-diacylglycerol: step 1/1.</text>
</comment>
<comment type="subcellular location">
    <subcellularLocation>
        <location evidence="1">Cell inner membrane</location>
        <topology evidence="1">Single-pass membrane protein</topology>
    </subcellularLocation>
</comment>
<comment type="similarity">
    <text evidence="1">Belongs to the Cdh family.</text>
</comment>
<organism>
    <name type="scientific">Cronobacter sakazakii (strain ATCC BAA-894)</name>
    <name type="common">Enterobacter sakazakii</name>
    <dbReference type="NCBI Taxonomy" id="290339"/>
    <lineage>
        <taxon>Bacteria</taxon>
        <taxon>Pseudomonadati</taxon>
        <taxon>Pseudomonadota</taxon>
        <taxon>Gammaproteobacteria</taxon>
        <taxon>Enterobacterales</taxon>
        <taxon>Enterobacteriaceae</taxon>
        <taxon>Cronobacter</taxon>
    </lineage>
</organism>
<dbReference type="EC" id="3.6.1.26" evidence="1"/>
<dbReference type="EMBL" id="CP000783">
    <property type="protein sequence ID" value="ABU79310.1"/>
    <property type="molecule type" value="Genomic_DNA"/>
</dbReference>
<dbReference type="RefSeq" id="WP_012126262.1">
    <property type="nucleotide sequence ID" value="NC_009778.1"/>
</dbReference>
<dbReference type="SMR" id="A7MQ68"/>
<dbReference type="KEGG" id="esa:ESA_04129"/>
<dbReference type="PATRIC" id="fig|290339.8.peg.3670"/>
<dbReference type="HOGENOM" id="CLU_077117_0_1_6"/>
<dbReference type="UniPathway" id="UPA00609">
    <property type="reaction ID" value="UER00664"/>
</dbReference>
<dbReference type="Proteomes" id="UP000000260">
    <property type="component" value="Chromosome"/>
</dbReference>
<dbReference type="GO" id="GO:0005886">
    <property type="term" value="C:plasma membrane"/>
    <property type="evidence" value="ECO:0007669"/>
    <property type="project" value="UniProtKB-SubCell"/>
</dbReference>
<dbReference type="GO" id="GO:0008715">
    <property type="term" value="F:CDP-diacylglycerol diphosphatase activity"/>
    <property type="evidence" value="ECO:0007669"/>
    <property type="project" value="UniProtKB-UniRule"/>
</dbReference>
<dbReference type="GO" id="GO:0046342">
    <property type="term" value="P:CDP-diacylglycerol catabolic process"/>
    <property type="evidence" value="ECO:0007669"/>
    <property type="project" value="UniProtKB-UniRule"/>
</dbReference>
<dbReference type="GO" id="GO:0008654">
    <property type="term" value="P:phospholipid biosynthetic process"/>
    <property type="evidence" value="ECO:0007669"/>
    <property type="project" value="UniProtKB-KW"/>
</dbReference>
<dbReference type="Gene3D" id="3.30.428.30">
    <property type="entry name" value="HIT family - CDH-like"/>
    <property type="match status" value="1"/>
</dbReference>
<dbReference type="HAMAP" id="MF_00319">
    <property type="entry name" value="Cdh"/>
    <property type="match status" value="1"/>
</dbReference>
<dbReference type="InterPro" id="IPR003763">
    <property type="entry name" value="CDP-diacylglyc_Pase"/>
</dbReference>
<dbReference type="InterPro" id="IPR036265">
    <property type="entry name" value="HIT-like_sf"/>
</dbReference>
<dbReference type="NCBIfam" id="NF003986">
    <property type="entry name" value="PRK05471.1-5"/>
    <property type="match status" value="1"/>
</dbReference>
<dbReference type="Pfam" id="PF02611">
    <property type="entry name" value="CDH"/>
    <property type="match status" value="1"/>
</dbReference>
<dbReference type="PIRSF" id="PIRSF001273">
    <property type="entry name" value="CDH"/>
    <property type="match status" value="1"/>
</dbReference>
<dbReference type="SUPFAM" id="SSF54197">
    <property type="entry name" value="HIT-like"/>
    <property type="match status" value="1"/>
</dbReference>
<sequence length="255" mass="28840">MKRALLITVALIAVLALTTLVAWRYLFPHDPDALRHIVMQQCLPGERERQEPAPCAQVNLPAGYVVLKDINGPLQYLLMPTWKINGVESPLLLSDNTPNFFWQAWQARRWMSEKRGSPVPDSAVSLTINSRMGRSQNHFHIHISCLRPDVRAQLDAAMNAIGSRWQPFPGSLRGHDYLARRVSGEELSRRSPFMMLAEEVPQAREHMGRYSLALAPLKDGAFVLLATQRQLLQFNLAHSEELQDHDCALLHEGTP</sequence>
<gene>
    <name evidence="1" type="primary">cdh</name>
    <name type="ordered locus">ESA_04129</name>
</gene>
<keyword id="KW-0997">Cell inner membrane</keyword>
<keyword id="KW-1003">Cell membrane</keyword>
<keyword id="KW-0378">Hydrolase</keyword>
<keyword id="KW-0444">Lipid biosynthesis</keyword>
<keyword id="KW-0443">Lipid metabolism</keyword>
<keyword id="KW-0472">Membrane</keyword>
<keyword id="KW-0594">Phospholipid biosynthesis</keyword>
<keyword id="KW-1208">Phospholipid metabolism</keyword>
<keyword id="KW-1185">Reference proteome</keyword>
<keyword id="KW-0812">Transmembrane</keyword>
<keyword id="KW-1133">Transmembrane helix</keyword>
<accession>A7MQ68</accession>
<reference key="1">
    <citation type="journal article" date="2010" name="PLoS ONE">
        <title>Genome sequence of Cronobacter sakazakii BAA-894 and comparative genomic hybridization analysis with other Cronobacter species.</title>
        <authorList>
            <person name="Kucerova E."/>
            <person name="Clifton S.W."/>
            <person name="Xia X.Q."/>
            <person name="Long F."/>
            <person name="Porwollik S."/>
            <person name="Fulton L."/>
            <person name="Fronick C."/>
            <person name="Minx P."/>
            <person name="Kyung K."/>
            <person name="Warren W."/>
            <person name="Fulton R."/>
            <person name="Feng D."/>
            <person name="Wollam A."/>
            <person name="Shah N."/>
            <person name="Bhonagiri V."/>
            <person name="Nash W.E."/>
            <person name="Hallsworth-Pepin K."/>
            <person name="Wilson R.K."/>
            <person name="McClelland M."/>
            <person name="Forsythe S.J."/>
        </authorList>
    </citation>
    <scope>NUCLEOTIDE SEQUENCE [LARGE SCALE GENOMIC DNA]</scope>
    <source>
        <strain>ATCC BAA-894</strain>
    </source>
</reference>